<keyword id="KW-1185">Reference proteome</keyword>
<organism>
    <name type="scientific">Mycobacterium phage L5</name>
    <name type="common">Mycobacteriophage L5</name>
    <dbReference type="NCBI Taxonomy" id="31757"/>
    <lineage>
        <taxon>Viruses</taxon>
        <taxon>Duplodnaviria</taxon>
        <taxon>Heunggongvirae</taxon>
        <taxon>Uroviricota</taxon>
        <taxon>Caudoviricetes</taxon>
        <taxon>Fromanvirus</taxon>
    </lineage>
</organism>
<gene>
    <name type="primary">60</name>
</gene>
<accession>Q05273</accession>
<feature type="chain" id="PRO_0000164794" description="Gene 60 protein">
    <location>
        <begin position="1"/>
        <end position="47"/>
    </location>
</feature>
<organismHost>
    <name type="scientific">Mycobacterium</name>
    <dbReference type="NCBI Taxonomy" id="1763"/>
</organismHost>
<proteinExistence type="predicted"/>
<reference key="1">
    <citation type="journal article" date="1993" name="Mol. Microbiol.">
        <title>DNA sequence, structure and gene expression of mycobacteriophage L5: a phage system for mycobacterial genetics.</title>
        <authorList>
            <person name="Hatfull G.F."/>
            <person name="Sarkis G.J."/>
        </authorList>
    </citation>
    <scope>NUCLEOTIDE SEQUENCE [LARGE SCALE GENOMIC DNA]</scope>
</reference>
<protein>
    <recommendedName>
        <fullName>Gene 60 protein</fullName>
    </recommendedName>
    <alternativeName>
        <fullName>Gp60</fullName>
    </alternativeName>
</protein>
<name>VG60_BPML5</name>
<sequence length="47" mass="5534">MNVSFKILGYEIASIEFDFGEDDERELTPLDKGRKALSRWWVRGMVK</sequence>
<dbReference type="EMBL" id="Z18946">
    <property type="protein sequence ID" value="CAA79436.1"/>
    <property type="molecule type" value="Genomic_DNA"/>
</dbReference>
<dbReference type="PIR" id="S31005">
    <property type="entry name" value="S31005"/>
</dbReference>
<dbReference type="RefSeq" id="NP_039724.1">
    <property type="nucleotide sequence ID" value="NC_001335.1"/>
</dbReference>
<dbReference type="GeneID" id="2942914"/>
<dbReference type="KEGG" id="vg:2942914"/>
<dbReference type="OrthoDB" id="28848at10239"/>
<dbReference type="Proteomes" id="UP000002123">
    <property type="component" value="Genome"/>
</dbReference>
<dbReference type="InterPro" id="IPR055852">
    <property type="entry name" value="DUF7429"/>
</dbReference>
<dbReference type="Pfam" id="PF24206">
    <property type="entry name" value="DUF7429"/>
    <property type="match status" value="1"/>
</dbReference>